<protein>
    <recommendedName>
        <fullName>Extracellular metalloproteinase 3</fullName>
        <ecNumber>3.4.24.-</ecNumber>
    </recommendedName>
    <alternativeName>
        <fullName>Fungalysin MEP3</fullName>
    </alternativeName>
</protein>
<gene>
    <name type="primary">MEP3</name>
</gene>
<keyword id="KW-0325">Glycoprotein</keyword>
<keyword id="KW-0378">Hydrolase</keyword>
<keyword id="KW-0479">Metal-binding</keyword>
<keyword id="KW-0482">Metalloprotease</keyword>
<keyword id="KW-0645">Protease</keyword>
<keyword id="KW-0964">Secreted</keyword>
<keyword id="KW-0732">Signal</keyword>
<keyword id="KW-0843">Virulence</keyword>
<keyword id="KW-0862">Zinc</keyword>
<keyword id="KW-0865">Zymogen</keyword>
<accession>B8XGR5</accession>
<accession>A1XIL9</accession>
<sequence>MHGLLLAGLLALPMNVLAHPAEQHASNVLSRRGVDIESFRLPLKAKYMDSDAAAQKIQAMSFSKDDDYVSTATKLVKSTFPKSTFRVVDDHYTGTNGIGHVHFKQTAHGLDIDNSDFNVNIDRDGKVFSFGNSFFTGEIPKENPMVKRAFSDPVKALKGAVKALNLPVKSDNAKAKTTAGKESFEFMGTTGALSAPKANLVYLQKEDGTLALTWRVETDVGDNWLLTYVDAHNSETVHNVVDYVASAEFKVFAWGLNDPTEGNPTSIRDPWTDSSPYTWHSDGMTKYPTTRGNNAIAQDNPTGGSTYINNYRPQSPNLIFNYPWSPTATPPSSYKDFSITQLFYTTNRFHDLLYSFGFNEAAGNFQVNNGNKGGRGNDFAIVNAQDGSGTNNANFATPPDGSPGRMRMYNWTTARPNRDGCLEAGIVIHEYAHGLSNRLCGGPANSGCLNALESGGMGEGWGDFYATAIRLKPRDTKDTNYSMGAWAANNPKGIRAYLYSTNLQTNPYMYTSVNSLREVHQIGTVWATMLYDLMWALIEAHGGTYSANPVFRNGVPQDGRHLAMKLVMDGMALQPCNPNFVQARDAILDADRALTNSANKCTIWKAFAKRGLGYGAKYDARNRTGSNRLPPGC</sequence>
<dbReference type="EC" id="3.4.24.-"/>
<dbReference type="EMBL" id="FJ348247">
    <property type="protein sequence ID" value="ACL37337.1"/>
    <property type="molecule type" value="Genomic_DNA"/>
</dbReference>
<dbReference type="EMBL" id="DQ384949">
    <property type="protein sequence ID" value="ABL84984.1"/>
    <property type="molecule type" value="Genomic_DNA"/>
</dbReference>
<dbReference type="EMBL" id="DQ409176">
    <property type="protein sequence ID" value="ABL84988.1"/>
    <property type="molecule type" value="Genomic_DNA"/>
</dbReference>
<dbReference type="EMBL" id="DQ409177">
    <property type="protein sequence ID" value="ABL84989.1"/>
    <property type="molecule type" value="Genomic_DNA"/>
</dbReference>
<dbReference type="SMR" id="B8XGR5"/>
<dbReference type="MEROPS" id="M36.001"/>
<dbReference type="GlyCosmos" id="B8XGR5">
    <property type="glycosylation" value="3 sites, No reported glycans"/>
</dbReference>
<dbReference type="VEuPathDB" id="FungiDB:TEQG_04323"/>
<dbReference type="GO" id="GO:0005576">
    <property type="term" value="C:extracellular region"/>
    <property type="evidence" value="ECO:0007669"/>
    <property type="project" value="UniProtKB-SubCell"/>
</dbReference>
<dbReference type="GO" id="GO:0004222">
    <property type="term" value="F:metalloendopeptidase activity"/>
    <property type="evidence" value="ECO:0007669"/>
    <property type="project" value="InterPro"/>
</dbReference>
<dbReference type="GO" id="GO:0008270">
    <property type="term" value="F:zinc ion binding"/>
    <property type="evidence" value="ECO:0007669"/>
    <property type="project" value="InterPro"/>
</dbReference>
<dbReference type="GO" id="GO:0006508">
    <property type="term" value="P:proteolysis"/>
    <property type="evidence" value="ECO:0007669"/>
    <property type="project" value="UniProtKB-KW"/>
</dbReference>
<dbReference type="CDD" id="cd09596">
    <property type="entry name" value="M36"/>
    <property type="match status" value="1"/>
</dbReference>
<dbReference type="Gene3D" id="3.10.170.10">
    <property type="match status" value="1"/>
</dbReference>
<dbReference type="Gene3D" id="1.10.390.10">
    <property type="entry name" value="Neutral Protease Domain 2"/>
    <property type="match status" value="1"/>
</dbReference>
<dbReference type="InterPro" id="IPR011096">
    <property type="entry name" value="FTP_domain"/>
</dbReference>
<dbReference type="InterPro" id="IPR050371">
    <property type="entry name" value="Fungal_virulence_M36"/>
</dbReference>
<dbReference type="InterPro" id="IPR001842">
    <property type="entry name" value="Peptidase_M36"/>
</dbReference>
<dbReference type="InterPro" id="IPR027268">
    <property type="entry name" value="Peptidase_M4/M1_CTD_sf"/>
</dbReference>
<dbReference type="PANTHER" id="PTHR33478">
    <property type="entry name" value="EXTRACELLULAR METALLOPROTEINASE MEP"/>
    <property type="match status" value="1"/>
</dbReference>
<dbReference type="PANTHER" id="PTHR33478:SF1">
    <property type="entry name" value="EXTRACELLULAR METALLOPROTEINASE MEP"/>
    <property type="match status" value="1"/>
</dbReference>
<dbReference type="Pfam" id="PF07504">
    <property type="entry name" value="FTP"/>
    <property type="match status" value="1"/>
</dbReference>
<dbReference type="Pfam" id="PF02128">
    <property type="entry name" value="Peptidase_M36"/>
    <property type="match status" value="1"/>
</dbReference>
<dbReference type="PRINTS" id="PR00999">
    <property type="entry name" value="FUNGALYSIN"/>
</dbReference>
<dbReference type="SUPFAM" id="SSF55486">
    <property type="entry name" value="Metalloproteases ('zincins'), catalytic domain"/>
    <property type="match status" value="1"/>
</dbReference>
<dbReference type="PROSITE" id="PS00142">
    <property type="entry name" value="ZINC_PROTEASE"/>
    <property type="match status" value="1"/>
</dbReference>
<evidence type="ECO:0000250" key="1"/>
<evidence type="ECO:0000255" key="2"/>
<evidence type="ECO:0000255" key="3">
    <source>
        <dbReference type="PROSITE-ProRule" id="PRU10095"/>
    </source>
</evidence>
<evidence type="ECO:0000269" key="4">
    <source>
    </source>
</evidence>
<evidence type="ECO:0000305" key="5"/>
<name>MEP3_TRIEQ</name>
<comment type="function">
    <text evidence="1">Secreted metalloproteinase probably acting as a virulence factor.</text>
</comment>
<comment type="cofactor">
    <cofactor evidence="1">
        <name>Zn(2+)</name>
        <dbReference type="ChEBI" id="CHEBI:29105"/>
    </cofactor>
    <text evidence="1">Binds 1 zinc ion per subunit.</text>
</comment>
<comment type="subcellular location">
    <subcellularLocation>
        <location evidence="4">Secreted</location>
    </subcellularLocation>
</comment>
<comment type="similarity">
    <text evidence="5">Belongs to the peptidase M36 family.</text>
</comment>
<reference key="1">
    <citation type="submission" date="2008-10" db="EMBL/GenBank/DDBJ databases">
        <title>Comparing putative pathogenicity factors between Trichophyton tonsurans and Trichophyton equinum.</title>
        <authorList>
            <person name="Krishnan S.K."/>
            <person name="Preuett B.L."/>
            <person name="Abdel-Rahman S.M."/>
        </authorList>
    </citation>
    <scope>NUCLEOTIDE SEQUENCE [GENOMIC DNA]</scope>
</reference>
<reference key="2">
    <citation type="journal article" date="2007" name="FEMS Microbiol. Lett.">
        <title>Closely related dermatophyte species produce different patterns of secreted proteins.</title>
        <authorList>
            <person name="Giddey K."/>
            <person name="Favre B."/>
            <person name="Quadroni M."/>
            <person name="Monod M."/>
        </authorList>
    </citation>
    <scope>NUCLEOTIDE SEQUENCE [GENOMIC DNA] OF 238-628</scope>
    <scope>IDENTIFICATION BY MASS SPECTROMETRY</scope>
    <scope>SUBCELLULAR LOCATION</scope>
    <source>
        <strain>IHEM 15219</strain>
        <strain>IHEM 20668</strain>
        <strain>IHEM 20669</strain>
    </source>
</reference>
<organism>
    <name type="scientific">Trichophyton equinum</name>
    <name type="common">Horse ringworm fungus</name>
    <dbReference type="NCBI Taxonomy" id="63418"/>
    <lineage>
        <taxon>Eukaryota</taxon>
        <taxon>Fungi</taxon>
        <taxon>Dikarya</taxon>
        <taxon>Ascomycota</taxon>
        <taxon>Pezizomycotina</taxon>
        <taxon>Eurotiomycetes</taxon>
        <taxon>Eurotiomycetidae</taxon>
        <taxon>Onygenales</taxon>
        <taxon>Arthrodermataceae</taxon>
        <taxon>Trichophyton</taxon>
    </lineage>
</organism>
<proteinExistence type="evidence at protein level"/>
<feature type="signal peptide" evidence="2">
    <location>
        <begin position="1"/>
        <end position="18"/>
    </location>
</feature>
<feature type="propeptide" id="PRO_0000380850" evidence="1">
    <location>
        <begin position="19"/>
        <end position="246"/>
    </location>
</feature>
<feature type="chain" id="PRO_0000380851" description="Extracellular metalloproteinase 3">
    <location>
        <begin position="247"/>
        <end position="633"/>
    </location>
</feature>
<feature type="active site" evidence="3">
    <location>
        <position position="430"/>
    </location>
</feature>
<feature type="binding site" evidence="3">
    <location>
        <position position="429"/>
    </location>
    <ligand>
        <name>Zn(2+)</name>
        <dbReference type="ChEBI" id="CHEBI:29105"/>
        <note>catalytic</note>
    </ligand>
</feature>
<feature type="binding site" evidence="3">
    <location>
        <position position="433"/>
    </location>
    <ligand>
        <name>Zn(2+)</name>
        <dbReference type="ChEBI" id="CHEBI:29105"/>
        <note>catalytic</note>
    </ligand>
</feature>
<feature type="glycosylation site" description="N-linked (GlcNAc...) asparagine" evidence="2">
    <location>
        <position position="410"/>
    </location>
</feature>
<feature type="glycosylation site" description="N-linked (GlcNAc...) asparagine" evidence="2">
    <location>
        <position position="480"/>
    </location>
</feature>
<feature type="glycosylation site" description="N-linked (GlcNAc...) asparagine" evidence="2">
    <location>
        <position position="622"/>
    </location>
</feature>